<sequence>MKQTIILLYGGRSAEREVSVLSAESVMRAVDYDRFTVKTFFISQSGDFIKTQEFSHAPGQEDRLMTNETIDWDKKVAPSAIYEEGAVVFPVLHGPMGEDGSVQGFLEVLKMPYVGCNILSSSLAMDKITTKRVLESAGIAQVPYVAIVEGDDVTAKIAEVEEKLAYPVFTKPSNMGSSVGISKSENQEELRQALKLAFRYDSRVLVEQGVNAREIEVGLLGNYDVKSTLPGEVVKDVAFYDYDAKYIDNKVTMDIPAKISDDVVAVMRQNAETAFRAIGGLGLSRCDFFYTDKGEIFLNELNTMPGFTQWSMYPLLWENMGISYPELIERLVDLAKESFDKREAHLI</sequence>
<protein>
    <recommendedName>
        <fullName evidence="2">D-alanine--D-alanine ligase</fullName>
        <ecNumber evidence="2">6.3.2.4</ecNumber>
    </recommendedName>
    <alternativeName>
        <fullName evidence="2">D-Ala-D-Ala ligase</fullName>
    </alternativeName>
    <alternativeName>
        <fullName evidence="2">D-alanylalanine synthetase</fullName>
    </alternativeName>
</protein>
<evidence type="ECO:0000250" key="1"/>
<evidence type="ECO:0000255" key="2">
    <source>
        <dbReference type="HAMAP-Rule" id="MF_00047"/>
    </source>
</evidence>
<name>DDL_STRR6</name>
<dbReference type="EC" id="6.3.2.4" evidence="2"/>
<dbReference type="EMBL" id="AE007317">
    <property type="protein sequence ID" value="AAL00319.1"/>
    <property type="molecule type" value="Genomic_DNA"/>
</dbReference>
<dbReference type="PIR" id="B98061">
    <property type="entry name" value="B98061"/>
</dbReference>
<dbReference type="RefSeq" id="NP_359108.1">
    <property type="nucleotide sequence ID" value="NC_003098.1"/>
</dbReference>
<dbReference type="RefSeq" id="WP_000814630.1">
    <property type="nucleotide sequence ID" value="NC_003098.1"/>
</dbReference>
<dbReference type="SMR" id="Q8DNV5"/>
<dbReference type="STRING" id="171101.spr1515"/>
<dbReference type="KEGG" id="spr:spr1515"/>
<dbReference type="PATRIC" id="fig|171101.6.peg.1635"/>
<dbReference type="eggNOG" id="COG1181">
    <property type="taxonomic scope" value="Bacteria"/>
</dbReference>
<dbReference type="HOGENOM" id="CLU_039268_0_0_9"/>
<dbReference type="UniPathway" id="UPA00219"/>
<dbReference type="Proteomes" id="UP000000586">
    <property type="component" value="Chromosome"/>
</dbReference>
<dbReference type="GO" id="GO:0005829">
    <property type="term" value="C:cytosol"/>
    <property type="evidence" value="ECO:0000318"/>
    <property type="project" value="GO_Central"/>
</dbReference>
<dbReference type="GO" id="GO:0005524">
    <property type="term" value="F:ATP binding"/>
    <property type="evidence" value="ECO:0007669"/>
    <property type="project" value="UniProtKB-KW"/>
</dbReference>
<dbReference type="GO" id="GO:0008716">
    <property type="term" value="F:D-alanine-D-alanine ligase activity"/>
    <property type="evidence" value="ECO:0000318"/>
    <property type="project" value="GO_Central"/>
</dbReference>
<dbReference type="GO" id="GO:0046872">
    <property type="term" value="F:metal ion binding"/>
    <property type="evidence" value="ECO:0007669"/>
    <property type="project" value="UniProtKB-KW"/>
</dbReference>
<dbReference type="GO" id="GO:0071555">
    <property type="term" value="P:cell wall organization"/>
    <property type="evidence" value="ECO:0007669"/>
    <property type="project" value="UniProtKB-KW"/>
</dbReference>
<dbReference type="GO" id="GO:0009252">
    <property type="term" value="P:peptidoglycan biosynthetic process"/>
    <property type="evidence" value="ECO:0000318"/>
    <property type="project" value="GO_Central"/>
</dbReference>
<dbReference type="GO" id="GO:0008360">
    <property type="term" value="P:regulation of cell shape"/>
    <property type="evidence" value="ECO:0007669"/>
    <property type="project" value="UniProtKB-KW"/>
</dbReference>
<dbReference type="FunFam" id="3.30.1490.20:FF:000007">
    <property type="entry name" value="D-alanine--D-alanine ligase"/>
    <property type="match status" value="1"/>
</dbReference>
<dbReference type="FunFam" id="3.30.470.20:FF:000008">
    <property type="entry name" value="D-alanine--D-alanine ligase"/>
    <property type="match status" value="1"/>
</dbReference>
<dbReference type="FunFam" id="3.40.50.20:FF:000029">
    <property type="entry name" value="D-alanine--D-alanine ligase"/>
    <property type="match status" value="1"/>
</dbReference>
<dbReference type="Gene3D" id="3.40.50.20">
    <property type="match status" value="1"/>
</dbReference>
<dbReference type="Gene3D" id="3.30.1490.20">
    <property type="entry name" value="ATP-grasp fold, A domain"/>
    <property type="match status" value="1"/>
</dbReference>
<dbReference type="Gene3D" id="3.30.470.20">
    <property type="entry name" value="ATP-grasp fold, B domain"/>
    <property type="match status" value="1"/>
</dbReference>
<dbReference type="HAMAP" id="MF_00047">
    <property type="entry name" value="Dala_Dala_lig"/>
    <property type="match status" value="1"/>
</dbReference>
<dbReference type="InterPro" id="IPR011761">
    <property type="entry name" value="ATP-grasp"/>
</dbReference>
<dbReference type="InterPro" id="IPR013815">
    <property type="entry name" value="ATP_grasp_subdomain_1"/>
</dbReference>
<dbReference type="InterPro" id="IPR000291">
    <property type="entry name" value="D-Ala_lig_Van_CS"/>
</dbReference>
<dbReference type="InterPro" id="IPR005905">
    <property type="entry name" value="D_ala_D_ala"/>
</dbReference>
<dbReference type="InterPro" id="IPR011095">
    <property type="entry name" value="Dala_Dala_lig_C"/>
</dbReference>
<dbReference type="InterPro" id="IPR011127">
    <property type="entry name" value="Dala_Dala_lig_N"/>
</dbReference>
<dbReference type="InterPro" id="IPR016185">
    <property type="entry name" value="PreATP-grasp_dom_sf"/>
</dbReference>
<dbReference type="NCBIfam" id="TIGR01205">
    <property type="entry name" value="D_ala_D_alaTIGR"/>
    <property type="match status" value="1"/>
</dbReference>
<dbReference type="NCBIfam" id="NF002528">
    <property type="entry name" value="PRK01966.1-4"/>
    <property type="match status" value="1"/>
</dbReference>
<dbReference type="NCBIfam" id="NF002529">
    <property type="entry name" value="PRK01966.1-5"/>
    <property type="match status" value="1"/>
</dbReference>
<dbReference type="PANTHER" id="PTHR23132">
    <property type="entry name" value="D-ALANINE--D-ALANINE LIGASE"/>
    <property type="match status" value="1"/>
</dbReference>
<dbReference type="PANTHER" id="PTHR23132:SF25">
    <property type="entry name" value="D-ALANINE--D-ALANINE LIGASE A"/>
    <property type="match status" value="1"/>
</dbReference>
<dbReference type="Pfam" id="PF07478">
    <property type="entry name" value="Dala_Dala_lig_C"/>
    <property type="match status" value="1"/>
</dbReference>
<dbReference type="Pfam" id="PF01820">
    <property type="entry name" value="Dala_Dala_lig_N"/>
    <property type="match status" value="1"/>
</dbReference>
<dbReference type="PIRSF" id="PIRSF039102">
    <property type="entry name" value="Ddl/VanB"/>
    <property type="match status" value="1"/>
</dbReference>
<dbReference type="SUPFAM" id="SSF56059">
    <property type="entry name" value="Glutathione synthetase ATP-binding domain-like"/>
    <property type="match status" value="1"/>
</dbReference>
<dbReference type="SUPFAM" id="SSF52440">
    <property type="entry name" value="PreATP-grasp domain"/>
    <property type="match status" value="1"/>
</dbReference>
<dbReference type="PROSITE" id="PS50975">
    <property type="entry name" value="ATP_GRASP"/>
    <property type="match status" value="1"/>
</dbReference>
<dbReference type="PROSITE" id="PS00843">
    <property type="entry name" value="DALA_DALA_LIGASE_1"/>
    <property type="match status" value="1"/>
</dbReference>
<dbReference type="PROSITE" id="PS00844">
    <property type="entry name" value="DALA_DALA_LIGASE_2"/>
    <property type="match status" value="1"/>
</dbReference>
<reference key="1">
    <citation type="journal article" date="2001" name="J. Bacteriol.">
        <title>Genome of the bacterium Streptococcus pneumoniae strain R6.</title>
        <authorList>
            <person name="Hoskins J."/>
            <person name="Alborn W.E. Jr."/>
            <person name="Arnold J."/>
            <person name="Blaszczak L.C."/>
            <person name="Burgett S."/>
            <person name="DeHoff B.S."/>
            <person name="Estrem S.T."/>
            <person name="Fritz L."/>
            <person name="Fu D.-J."/>
            <person name="Fuller W."/>
            <person name="Geringer C."/>
            <person name="Gilmour R."/>
            <person name="Glass J.S."/>
            <person name="Khoja H."/>
            <person name="Kraft A.R."/>
            <person name="Lagace R.E."/>
            <person name="LeBlanc D.J."/>
            <person name="Lee L.N."/>
            <person name="Lefkowitz E.J."/>
            <person name="Lu J."/>
            <person name="Matsushima P."/>
            <person name="McAhren S.M."/>
            <person name="McHenney M."/>
            <person name="McLeaster K."/>
            <person name="Mundy C.W."/>
            <person name="Nicas T.I."/>
            <person name="Norris F.H."/>
            <person name="O'Gara M."/>
            <person name="Peery R.B."/>
            <person name="Robertson G.T."/>
            <person name="Rockey P."/>
            <person name="Sun P.-M."/>
            <person name="Winkler M.E."/>
            <person name="Yang Y."/>
            <person name="Young-Bellido M."/>
            <person name="Zhao G."/>
            <person name="Zook C.A."/>
            <person name="Baltz R.H."/>
            <person name="Jaskunas S.R."/>
            <person name="Rosteck P.R. Jr."/>
            <person name="Skatrud P.L."/>
            <person name="Glass J.I."/>
        </authorList>
    </citation>
    <scope>NUCLEOTIDE SEQUENCE [LARGE SCALE GENOMIC DNA]</scope>
    <source>
        <strain>ATCC BAA-255 / R6</strain>
    </source>
</reference>
<proteinExistence type="inferred from homology"/>
<feature type="chain" id="PRO_0000177888" description="D-alanine--D-alanine ligase">
    <location>
        <begin position="1"/>
        <end position="347"/>
    </location>
</feature>
<feature type="domain" description="ATP-grasp" evidence="2">
    <location>
        <begin position="131"/>
        <end position="333"/>
    </location>
</feature>
<feature type="binding site" evidence="2">
    <location>
        <begin position="161"/>
        <end position="216"/>
    </location>
    <ligand>
        <name>ATP</name>
        <dbReference type="ChEBI" id="CHEBI:30616"/>
    </ligand>
</feature>
<feature type="binding site" evidence="2">
    <location>
        <position position="287"/>
    </location>
    <ligand>
        <name>Mg(2+)</name>
        <dbReference type="ChEBI" id="CHEBI:18420"/>
        <label>1</label>
    </ligand>
</feature>
<feature type="binding site" evidence="2">
    <location>
        <position position="300"/>
    </location>
    <ligand>
        <name>Mg(2+)</name>
        <dbReference type="ChEBI" id="CHEBI:18420"/>
        <label>1</label>
    </ligand>
</feature>
<feature type="binding site" evidence="2">
    <location>
        <position position="300"/>
    </location>
    <ligand>
        <name>Mg(2+)</name>
        <dbReference type="ChEBI" id="CHEBI:18420"/>
        <label>2</label>
    </ligand>
</feature>
<feature type="binding site" evidence="2">
    <location>
        <position position="302"/>
    </location>
    <ligand>
        <name>Mg(2+)</name>
        <dbReference type="ChEBI" id="CHEBI:18420"/>
        <label>2</label>
    </ligand>
</feature>
<gene>
    <name evidence="2" type="primary">ddl</name>
    <name type="ordered locus">spr1515</name>
</gene>
<comment type="function">
    <text evidence="2">Cell wall formation.</text>
</comment>
<comment type="catalytic activity">
    <reaction evidence="2">
        <text>2 D-alanine + ATP = D-alanyl-D-alanine + ADP + phosphate + H(+)</text>
        <dbReference type="Rhea" id="RHEA:11224"/>
        <dbReference type="ChEBI" id="CHEBI:15378"/>
        <dbReference type="ChEBI" id="CHEBI:30616"/>
        <dbReference type="ChEBI" id="CHEBI:43474"/>
        <dbReference type="ChEBI" id="CHEBI:57416"/>
        <dbReference type="ChEBI" id="CHEBI:57822"/>
        <dbReference type="ChEBI" id="CHEBI:456216"/>
        <dbReference type="EC" id="6.3.2.4"/>
    </reaction>
</comment>
<comment type="cofactor">
    <cofactor evidence="1">
        <name>Mg(2+)</name>
        <dbReference type="ChEBI" id="CHEBI:18420"/>
    </cofactor>
    <cofactor evidence="1">
        <name>Mn(2+)</name>
        <dbReference type="ChEBI" id="CHEBI:29035"/>
    </cofactor>
    <text evidence="1">Binds 2 magnesium or manganese ions per subunit.</text>
</comment>
<comment type="pathway">
    <text evidence="2">Cell wall biogenesis; peptidoglycan biosynthesis.</text>
</comment>
<comment type="subcellular location">
    <subcellularLocation>
        <location evidence="2">Cytoplasm</location>
    </subcellularLocation>
</comment>
<comment type="similarity">
    <text evidence="2">Belongs to the D-alanine--D-alanine ligase family.</text>
</comment>
<organism>
    <name type="scientific">Streptococcus pneumoniae (strain ATCC BAA-255 / R6)</name>
    <dbReference type="NCBI Taxonomy" id="171101"/>
    <lineage>
        <taxon>Bacteria</taxon>
        <taxon>Bacillati</taxon>
        <taxon>Bacillota</taxon>
        <taxon>Bacilli</taxon>
        <taxon>Lactobacillales</taxon>
        <taxon>Streptococcaceae</taxon>
        <taxon>Streptococcus</taxon>
    </lineage>
</organism>
<accession>Q8DNV5</accession>
<keyword id="KW-0067">ATP-binding</keyword>
<keyword id="KW-0133">Cell shape</keyword>
<keyword id="KW-0961">Cell wall biogenesis/degradation</keyword>
<keyword id="KW-0963">Cytoplasm</keyword>
<keyword id="KW-0436">Ligase</keyword>
<keyword id="KW-0460">Magnesium</keyword>
<keyword id="KW-0464">Manganese</keyword>
<keyword id="KW-0479">Metal-binding</keyword>
<keyword id="KW-0547">Nucleotide-binding</keyword>
<keyword id="KW-0573">Peptidoglycan synthesis</keyword>
<keyword id="KW-1185">Reference proteome</keyword>